<organism>
    <name type="scientific">Oryza sativa subsp. japonica</name>
    <name type="common">Rice</name>
    <dbReference type="NCBI Taxonomy" id="39947"/>
    <lineage>
        <taxon>Eukaryota</taxon>
        <taxon>Viridiplantae</taxon>
        <taxon>Streptophyta</taxon>
        <taxon>Embryophyta</taxon>
        <taxon>Tracheophyta</taxon>
        <taxon>Spermatophyta</taxon>
        <taxon>Magnoliopsida</taxon>
        <taxon>Liliopsida</taxon>
        <taxon>Poales</taxon>
        <taxon>Poaceae</taxon>
        <taxon>BOP clade</taxon>
        <taxon>Oryzoideae</taxon>
        <taxon>Oryzeae</taxon>
        <taxon>Oryzinae</taxon>
        <taxon>Oryza</taxon>
        <taxon>Oryza sativa</taxon>
    </lineage>
</organism>
<sequence length="346" mass="38698">MASAETPNPDAEIPNTDAAAAADPAAAAPAAAATDPAAAGSPSPPLPPRKRRLSPTPSPTRRSSRSRSRSPRRGRSRSRSRSRSRGRSASPRYPDGKRRRHNDLNVEVCRDFLRDRCARADIECKYAHPHPTVAVDRDSKVTACADSLRNNCFRGRTCRYYHPPPHIQESLLRSIGVEDPKVKMQVCRDFTRGRCSRSANECRFLHHSPLEDCAIVCQDFLRGRCDRKSCRYSHVMAHPMPPPMRDIPMQYPDMVYMPPPAPLGVPMMMPPPSAPAAFSGNNYGVEVCRDYLKNMCNRESCRFAHPDLNNEVMNTQVEVCRDFKRGECNRPACRFYHPPASSNSIG</sequence>
<protein>
    <recommendedName>
        <fullName>Zinc finger CCCH domain-containing protein 28</fullName>
        <shortName>OsC3H28</shortName>
    </recommendedName>
</protein>
<gene>
    <name type="ordered locus">Os04g0438700</name>
    <name type="ordered locus">LOC_Os04g35800</name>
    <name type="ORF">OJ000114_01.2</name>
</gene>
<feature type="chain" id="PRO_0000346823" description="Zinc finger CCCH domain-containing protein 28">
    <location>
        <begin position="1"/>
        <end position="346"/>
    </location>
</feature>
<feature type="zinc finger region" description="C3H1-type 1" evidence="1">
    <location>
        <begin position="103"/>
        <end position="131"/>
    </location>
</feature>
<feature type="zinc finger region" description="C3H1-type 2" evidence="1">
    <location>
        <begin position="138"/>
        <end position="165"/>
    </location>
</feature>
<feature type="zinc finger region" description="C3H1-type 3" evidence="1">
    <location>
        <begin position="181"/>
        <end position="209"/>
    </location>
</feature>
<feature type="zinc finger region" description="C3H1-type 4" evidence="1">
    <location>
        <begin position="211"/>
        <end position="237"/>
    </location>
</feature>
<feature type="zinc finger region" description="C3H1-type 5" evidence="1">
    <location>
        <begin position="282"/>
        <end position="308"/>
    </location>
</feature>
<feature type="zinc finger region" description="C3H1-type 6" evidence="1">
    <location>
        <begin position="314"/>
        <end position="340"/>
    </location>
</feature>
<feature type="region of interest" description="Disordered" evidence="2">
    <location>
        <begin position="1"/>
        <end position="99"/>
    </location>
</feature>
<feature type="compositionally biased region" description="Low complexity" evidence="2">
    <location>
        <begin position="17"/>
        <end position="41"/>
    </location>
</feature>
<feature type="compositionally biased region" description="Basic residues" evidence="2">
    <location>
        <begin position="62"/>
        <end position="86"/>
    </location>
</feature>
<feature type="sequence conflict" description="In Ref. 5; AK060634." evidence="3" ref="5">
    <original>C</original>
    <variation>R</variation>
    <location>
        <position position="117"/>
    </location>
</feature>
<proteinExistence type="evidence at transcript level"/>
<name>C3H28_ORYSJ</name>
<keyword id="KW-0238">DNA-binding</keyword>
<keyword id="KW-0479">Metal-binding</keyword>
<keyword id="KW-1185">Reference proteome</keyword>
<keyword id="KW-0677">Repeat</keyword>
<keyword id="KW-0862">Zinc</keyword>
<keyword id="KW-0863">Zinc-finger</keyword>
<accession>Q0JD07</accession>
<accession>A0A0P0WB10</accession>
<accession>Q7XQH5</accession>
<evidence type="ECO:0000255" key="1">
    <source>
        <dbReference type="PROSITE-ProRule" id="PRU00723"/>
    </source>
</evidence>
<evidence type="ECO:0000256" key="2">
    <source>
        <dbReference type="SAM" id="MobiDB-lite"/>
    </source>
</evidence>
<evidence type="ECO:0000305" key="3"/>
<reference key="1">
    <citation type="journal article" date="2002" name="Nature">
        <title>Sequence and analysis of rice chromosome 4.</title>
        <authorList>
            <person name="Feng Q."/>
            <person name="Zhang Y."/>
            <person name="Hao P."/>
            <person name="Wang S."/>
            <person name="Fu G."/>
            <person name="Huang Y."/>
            <person name="Li Y."/>
            <person name="Zhu J."/>
            <person name="Liu Y."/>
            <person name="Hu X."/>
            <person name="Jia P."/>
            <person name="Zhang Y."/>
            <person name="Zhao Q."/>
            <person name="Ying K."/>
            <person name="Yu S."/>
            <person name="Tang Y."/>
            <person name="Weng Q."/>
            <person name="Zhang L."/>
            <person name="Lu Y."/>
            <person name="Mu J."/>
            <person name="Lu Y."/>
            <person name="Zhang L.S."/>
            <person name="Yu Z."/>
            <person name="Fan D."/>
            <person name="Liu X."/>
            <person name="Lu T."/>
            <person name="Li C."/>
            <person name="Wu Y."/>
            <person name="Sun T."/>
            <person name="Lei H."/>
            <person name="Li T."/>
            <person name="Hu H."/>
            <person name="Guan J."/>
            <person name="Wu M."/>
            <person name="Zhang R."/>
            <person name="Zhou B."/>
            <person name="Chen Z."/>
            <person name="Chen L."/>
            <person name="Jin Z."/>
            <person name="Wang R."/>
            <person name="Yin H."/>
            <person name="Cai Z."/>
            <person name="Ren S."/>
            <person name="Lv G."/>
            <person name="Gu W."/>
            <person name="Zhu G."/>
            <person name="Tu Y."/>
            <person name="Jia J."/>
            <person name="Zhang Y."/>
            <person name="Chen J."/>
            <person name="Kang H."/>
            <person name="Chen X."/>
            <person name="Shao C."/>
            <person name="Sun Y."/>
            <person name="Hu Q."/>
            <person name="Zhang X."/>
            <person name="Zhang W."/>
            <person name="Wang L."/>
            <person name="Ding C."/>
            <person name="Sheng H."/>
            <person name="Gu J."/>
            <person name="Chen S."/>
            <person name="Ni L."/>
            <person name="Zhu F."/>
            <person name="Chen W."/>
            <person name="Lan L."/>
            <person name="Lai Y."/>
            <person name="Cheng Z."/>
            <person name="Gu M."/>
            <person name="Jiang J."/>
            <person name="Li J."/>
            <person name="Hong G."/>
            <person name="Xue Y."/>
            <person name="Han B."/>
        </authorList>
    </citation>
    <scope>NUCLEOTIDE SEQUENCE [LARGE SCALE GENOMIC DNA]</scope>
    <source>
        <strain>cv. Nipponbare</strain>
    </source>
</reference>
<reference key="2">
    <citation type="journal article" date="2005" name="Nature">
        <title>The map-based sequence of the rice genome.</title>
        <authorList>
            <consortium name="International rice genome sequencing project (IRGSP)"/>
        </authorList>
    </citation>
    <scope>NUCLEOTIDE SEQUENCE [LARGE SCALE GENOMIC DNA]</scope>
    <source>
        <strain>cv. Nipponbare</strain>
    </source>
</reference>
<reference key="3">
    <citation type="journal article" date="2008" name="Nucleic Acids Res.">
        <title>The rice annotation project database (RAP-DB): 2008 update.</title>
        <authorList>
            <consortium name="The rice annotation project (RAP)"/>
        </authorList>
    </citation>
    <scope>GENOME REANNOTATION</scope>
    <source>
        <strain>cv. Nipponbare</strain>
    </source>
</reference>
<reference key="4">
    <citation type="journal article" date="2013" name="Rice">
        <title>Improvement of the Oryza sativa Nipponbare reference genome using next generation sequence and optical map data.</title>
        <authorList>
            <person name="Kawahara Y."/>
            <person name="de la Bastide M."/>
            <person name="Hamilton J.P."/>
            <person name="Kanamori H."/>
            <person name="McCombie W.R."/>
            <person name="Ouyang S."/>
            <person name="Schwartz D.C."/>
            <person name="Tanaka T."/>
            <person name="Wu J."/>
            <person name="Zhou S."/>
            <person name="Childs K.L."/>
            <person name="Davidson R.M."/>
            <person name="Lin H."/>
            <person name="Quesada-Ocampo L."/>
            <person name="Vaillancourt B."/>
            <person name="Sakai H."/>
            <person name="Lee S.S."/>
            <person name="Kim J."/>
            <person name="Numa H."/>
            <person name="Itoh T."/>
            <person name="Buell C.R."/>
            <person name="Matsumoto T."/>
        </authorList>
    </citation>
    <scope>GENOME REANNOTATION</scope>
    <source>
        <strain>cv. Nipponbare</strain>
    </source>
</reference>
<reference key="5">
    <citation type="journal article" date="2003" name="Science">
        <title>Collection, mapping, and annotation of over 28,000 cDNA clones from japonica rice.</title>
        <authorList>
            <consortium name="The rice full-length cDNA consortium"/>
        </authorList>
    </citation>
    <scope>NUCLEOTIDE SEQUENCE [LARGE SCALE MRNA]</scope>
    <source>
        <strain>cv. Nipponbare</strain>
    </source>
</reference>
<reference key="6">
    <citation type="journal article" date="2008" name="BMC Genomics">
        <title>Genome-wide analysis of CCCH zinc finger family in Arabidopsis and rice.</title>
        <authorList>
            <person name="Wang D."/>
            <person name="Guo Y."/>
            <person name="Wu C."/>
            <person name="Yang G."/>
            <person name="Li Y."/>
            <person name="Zheng C."/>
        </authorList>
    </citation>
    <scope>NOMENCLATURE</scope>
</reference>
<comment type="sequence caution" evidence="3">
    <conflict type="erroneous gene model prediction">
        <sequence resource="EMBL-CDS" id="CAE03121"/>
    </conflict>
</comment>
<dbReference type="EMBL" id="AL606452">
    <property type="protein sequence ID" value="CAE03121.3"/>
    <property type="status" value="ALT_SEQ"/>
    <property type="molecule type" value="Genomic_DNA"/>
</dbReference>
<dbReference type="EMBL" id="AP008210">
    <property type="protein sequence ID" value="BAF14780.1"/>
    <property type="molecule type" value="Genomic_DNA"/>
</dbReference>
<dbReference type="EMBL" id="AP014960">
    <property type="protein sequence ID" value="BAS89327.1"/>
    <property type="molecule type" value="Genomic_DNA"/>
</dbReference>
<dbReference type="EMBL" id="AK060634">
    <property type="status" value="NOT_ANNOTATED_CDS"/>
    <property type="molecule type" value="mRNA"/>
</dbReference>
<dbReference type="RefSeq" id="XP_015636416.1">
    <property type="nucleotide sequence ID" value="XM_015780930.1"/>
</dbReference>
<dbReference type="RefSeq" id="XP_015636417.1">
    <property type="nucleotide sequence ID" value="XM_015780931.1"/>
</dbReference>
<dbReference type="SMR" id="Q0JD07"/>
<dbReference type="FunCoup" id="Q0JD07">
    <property type="interactions" value="47"/>
</dbReference>
<dbReference type="STRING" id="39947.Q0JD07"/>
<dbReference type="iPTMnet" id="Q0JD07"/>
<dbReference type="PaxDb" id="39947-Q0JD07"/>
<dbReference type="EnsemblPlants" id="Os04t0438700-01">
    <property type="protein sequence ID" value="Os04t0438700-01"/>
    <property type="gene ID" value="Os04g0438700"/>
</dbReference>
<dbReference type="GeneID" id="4335921"/>
<dbReference type="Gramene" id="Os04t0438700-01">
    <property type="protein sequence ID" value="Os04t0438700-01"/>
    <property type="gene ID" value="Os04g0438700"/>
</dbReference>
<dbReference type="KEGG" id="dosa:Os04g0438700"/>
<dbReference type="KEGG" id="osa:4335921"/>
<dbReference type="eggNOG" id="KOG2494">
    <property type="taxonomic scope" value="Eukaryota"/>
</dbReference>
<dbReference type="HOGENOM" id="CLU_817318_0_0_1"/>
<dbReference type="InParanoid" id="Q0JD07"/>
<dbReference type="OMA" id="IECKYAH"/>
<dbReference type="OrthoDB" id="411372at2759"/>
<dbReference type="Proteomes" id="UP000000763">
    <property type="component" value="Chromosome 4"/>
</dbReference>
<dbReference type="Proteomes" id="UP000059680">
    <property type="component" value="Chromosome 4"/>
</dbReference>
<dbReference type="GO" id="GO:0003677">
    <property type="term" value="F:DNA binding"/>
    <property type="evidence" value="ECO:0007669"/>
    <property type="project" value="UniProtKB-KW"/>
</dbReference>
<dbReference type="GO" id="GO:0003723">
    <property type="term" value="F:RNA binding"/>
    <property type="evidence" value="ECO:0000318"/>
    <property type="project" value="GO_Central"/>
</dbReference>
<dbReference type="GO" id="GO:0008270">
    <property type="term" value="F:zinc ion binding"/>
    <property type="evidence" value="ECO:0007669"/>
    <property type="project" value="UniProtKB-KW"/>
</dbReference>
<dbReference type="GO" id="GO:0043484">
    <property type="term" value="P:regulation of RNA splicing"/>
    <property type="evidence" value="ECO:0000318"/>
    <property type="project" value="GO_Central"/>
</dbReference>
<dbReference type="FunFam" id="3.30.1370.210:FF:000010">
    <property type="entry name" value="Zinc finger CCCH domain-containing protein 28"/>
    <property type="match status" value="1"/>
</dbReference>
<dbReference type="FunFam" id="3.30.1370.210:FF:000011">
    <property type="entry name" value="Zinc finger CCCH domain-containing protein 28"/>
    <property type="match status" value="1"/>
</dbReference>
<dbReference type="FunFam" id="3.30.1370.210:FF:000012">
    <property type="entry name" value="Zinc finger CCCH domain-containing protein 28"/>
    <property type="match status" value="1"/>
</dbReference>
<dbReference type="Gene3D" id="3.30.1370.210">
    <property type="match status" value="3"/>
</dbReference>
<dbReference type="InterPro" id="IPR054429">
    <property type="entry name" value="Znf-CCCH_Muscleblind-like"/>
</dbReference>
<dbReference type="InterPro" id="IPR000571">
    <property type="entry name" value="Znf_CCCH"/>
</dbReference>
<dbReference type="PANTHER" id="PTHR12675">
    <property type="entry name" value="MUSCLEBLIND-LIKE PROTEIN"/>
    <property type="match status" value="1"/>
</dbReference>
<dbReference type="PANTHER" id="PTHR12675:SF6">
    <property type="entry name" value="ZINC FINGER CCCH DOMAIN-CONTAINING PROTEIN 10"/>
    <property type="match status" value="1"/>
</dbReference>
<dbReference type="Pfam" id="PF22628">
    <property type="entry name" value="zf-CCCH_10"/>
    <property type="match status" value="5"/>
</dbReference>
<dbReference type="Pfam" id="PF14608">
    <property type="entry name" value="zf-CCCH_2"/>
    <property type="match status" value="1"/>
</dbReference>
<dbReference type="SMART" id="SM00356">
    <property type="entry name" value="ZnF_C3H1"/>
    <property type="match status" value="6"/>
</dbReference>
<dbReference type="PROSITE" id="PS50103">
    <property type="entry name" value="ZF_C3H1"/>
    <property type="match status" value="6"/>
</dbReference>